<organism>
    <name type="scientific">Burkholderia thailandensis (strain ATCC 700388 / DSM 13276 / CCUG 48851 / CIP 106301 / E264)</name>
    <dbReference type="NCBI Taxonomy" id="271848"/>
    <lineage>
        <taxon>Bacteria</taxon>
        <taxon>Pseudomonadati</taxon>
        <taxon>Pseudomonadota</taxon>
        <taxon>Betaproteobacteria</taxon>
        <taxon>Burkholderiales</taxon>
        <taxon>Burkholderiaceae</taxon>
        <taxon>Burkholderia</taxon>
        <taxon>pseudomallei group</taxon>
    </lineage>
</organism>
<keyword id="KW-0067">ATP-binding</keyword>
<keyword id="KW-0997">Cell inner membrane</keyword>
<keyword id="KW-1003">Cell membrane</keyword>
<keyword id="KW-0472">Membrane</keyword>
<keyword id="KW-0547">Nucleotide-binding</keyword>
<keyword id="KW-1278">Translocase</keyword>
<keyword id="KW-0813">Transport</keyword>
<protein>
    <recommendedName>
        <fullName evidence="1">Hemin import ATP-binding protein HmuV</fullName>
        <ecNumber evidence="1">7.6.2.-</ecNumber>
    </recommendedName>
</protein>
<reference key="1">
    <citation type="journal article" date="2005" name="BMC Genomics">
        <title>Bacterial genome adaptation to niches: divergence of the potential virulence genes in three Burkholderia species of different survival strategies.</title>
        <authorList>
            <person name="Kim H.S."/>
            <person name="Schell M.A."/>
            <person name="Yu Y."/>
            <person name="Ulrich R.L."/>
            <person name="Sarria S.H."/>
            <person name="Nierman W.C."/>
            <person name="DeShazer D."/>
        </authorList>
    </citation>
    <scope>NUCLEOTIDE SEQUENCE [LARGE SCALE GENOMIC DNA]</scope>
    <source>
        <strain>ATCC 700388 / DSM 13276 / CCUG 48851 / CIP 106301 / E264</strain>
    </source>
</reference>
<sequence>MLNAEHLHVARDSGVILRDLSIRIAPGCVTALLGRNGAGKSTLLGALAGDLPAGGRTRGATVRGDVALNGEPLRAIDATRLARLRAVLPQASRPAFAFSARDIVLLGRYPHARRAGALAREDGEIASRALALAGASTLDARDVTTLSGGELARVQFARVLAQLWPSEDAARAPRYLLLDEPTAALDLAHQHQLLDTVRRLSRDWNIGVLTIVHDPNLAARHADRIAMLADGEILADGAPADVLRPDLIERCYGFRVRLVDAGDDVAPVIVPA</sequence>
<proteinExistence type="inferred from homology"/>
<name>HMUV_BURTA</name>
<dbReference type="EC" id="7.6.2.-" evidence="1"/>
<dbReference type="EMBL" id="CP000085">
    <property type="protein sequence ID" value="ABC35763.1"/>
    <property type="molecule type" value="Genomic_DNA"/>
</dbReference>
<dbReference type="RefSeq" id="WP_009894122.1">
    <property type="nucleotide sequence ID" value="NZ_CP008785.1"/>
</dbReference>
<dbReference type="SMR" id="Q2T3B8"/>
<dbReference type="GeneID" id="45119555"/>
<dbReference type="KEGG" id="bte:BTH_II2143"/>
<dbReference type="HOGENOM" id="CLU_000604_1_11_4"/>
<dbReference type="Proteomes" id="UP000001930">
    <property type="component" value="Chromosome II"/>
</dbReference>
<dbReference type="GO" id="GO:0005886">
    <property type="term" value="C:plasma membrane"/>
    <property type="evidence" value="ECO:0007669"/>
    <property type="project" value="UniProtKB-SubCell"/>
</dbReference>
<dbReference type="GO" id="GO:0005524">
    <property type="term" value="F:ATP binding"/>
    <property type="evidence" value="ECO:0007669"/>
    <property type="project" value="UniProtKB-KW"/>
</dbReference>
<dbReference type="GO" id="GO:0016887">
    <property type="term" value="F:ATP hydrolysis activity"/>
    <property type="evidence" value="ECO:0007669"/>
    <property type="project" value="InterPro"/>
</dbReference>
<dbReference type="CDD" id="cd03214">
    <property type="entry name" value="ABC_Iron-Siderophores_B12_Hemin"/>
    <property type="match status" value="1"/>
</dbReference>
<dbReference type="Gene3D" id="3.40.50.300">
    <property type="entry name" value="P-loop containing nucleotide triphosphate hydrolases"/>
    <property type="match status" value="1"/>
</dbReference>
<dbReference type="InterPro" id="IPR003593">
    <property type="entry name" value="AAA+_ATPase"/>
</dbReference>
<dbReference type="InterPro" id="IPR003439">
    <property type="entry name" value="ABC_transporter-like_ATP-bd"/>
</dbReference>
<dbReference type="InterPro" id="IPR017871">
    <property type="entry name" value="ABC_transporter-like_CS"/>
</dbReference>
<dbReference type="InterPro" id="IPR027417">
    <property type="entry name" value="P-loop_NTPase"/>
</dbReference>
<dbReference type="NCBIfam" id="NF010067">
    <property type="entry name" value="PRK13547.1"/>
    <property type="match status" value="1"/>
</dbReference>
<dbReference type="NCBIfam" id="NF010068">
    <property type="entry name" value="PRK13548.1"/>
    <property type="match status" value="1"/>
</dbReference>
<dbReference type="PANTHER" id="PTHR42794">
    <property type="entry name" value="HEMIN IMPORT ATP-BINDING PROTEIN HMUV"/>
    <property type="match status" value="1"/>
</dbReference>
<dbReference type="PANTHER" id="PTHR42794:SF1">
    <property type="entry name" value="HEMIN IMPORT ATP-BINDING PROTEIN HMUV"/>
    <property type="match status" value="1"/>
</dbReference>
<dbReference type="Pfam" id="PF00005">
    <property type="entry name" value="ABC_tran"/>
    <property type="match status" value="1"/>
</dbReference>
<dbReference type="SMART" id="SM00382">
    <property type="entry name" value="AAA"/>
    <property type="match status" value="1"/>
</dbReference>
<dbReference type="SUPFAM" id="SSF52540">
    <property type="entry name" value="P-loop containing nucleoside triphosphate hydrolases"/>
    <property type="match status" value="1"/>
</dbReference>
<dbReference type="PROSITE" id="PS00211">
    <property type="entry name" value="ABC_TRANSPORTER_1"/>
    <property type="match status" value="1"/>
</dbReference>
<dbReference type="PROSITE" id="PS50893">
    <property type="entry name" value="ABC_TRANSPORTER_2"/>
    <property type="match status" value="1"/>
</dbReference>
<dbReference type="PROSITE" id="PS51261">
    <property type="entry name" value="HMUV"/>
    <property type="match status" value="1"/>
</dbReference>
<comment type="function">
    <text evidence="1">Part of the ABC transporter complex HmuTUV involved in hemin import. Responsible for energy coupling to the transport system.</text>
</comment>
<comment type="subunit">
    <text evidence="1">The complex is composed of two ATP-binding proteins (HmuV), two transmembrane proteins (HmuU) and a solute-binding protein (HmuT).</text>
</comment>
<comment type="subcellular location">
    <subcellularLocation>
        <location evidence="1">Cell inner membrane</location>
        <topology evidence="1">Peripheral membrane protein</topology>
    </subcellularLocation>
</comment>
<comment type="similarity">
    <text evidence="1">Belongs to the ABC transporter superfamily. Heme (hemin) importer (TC 3.A.1.14.5) family.</text>
</comment>
<evidence type="ECO:0000255" key="1">
    <source>
        <dbReference type="HAMAP-Rule" id="MF_01718"/>
    </source>
</evidence>
<gene>
    <name evidence="1" type="primary">hmuV</name>
    <name type="ordered locus">BTH_II2143</name>
</gene>
<feature type="chain" id="PRO_0000269586" description="Hemin import ATP-binding protein HmuV">
    <location>
        <begin position="1"/>
        <end position="272"/>
    </location>
</feature>
<feature type="domain" description="ABC transporter" evidence="1">
    <location>
        <begin position="2"/>
        <end position="255"/>
    </location>
</feature>
<feature type="binding site" evidence="1">
    <location>
        <begin position="34"/>
        <end position="41"/>
    </location>
    <ligand>
        <name>ATP</name>
        <dbReference type="ChEBI" id="CHEBI:30616"/>
    </ligand>
</feature>
<accession>Q2T3B8</accession>